<dbReference type="EC" id="7.5.2.11" evidence="1"/>
<dbReference type="EMBL" id="BA000016">
    <property type="protein sequence ID" value="BAB81048.1"/>
    <property type="molecule type" value="Genomic_DNA"/>
</dbReference>
<dbReference type="RefSeq" id="WP_011010399.1">
    <property type="nucleotide sequence ID" value="NC_003366.1"/>
</dbReference>
<dbReference type="SMR" id="Q8XKQ2"/>
<dbReference type="STRING" id="195102.gene:10490605"/>
<dbReference type="KEGG" id="cpe:CPE1342"/>
<dbReference type="HOGENOM" id="CLU_000604_92_3_9"/>
<dbReference type="Proteomes" id="UP000000818">
    <property type="component" value="Chromosome"/>
</dbReference>
<dbReference type="GO" id="GO:0005886">
    <property type="term" value="C:plasma membrane"/>
    <property type="evidence" value="ECO:0007669"/>
    <property type="project" value="UniProtKB-SubCell"/>
</dbReference>
<dbReference type="GO" id="GO:0005524">
    <property type="term" value="F:ATP binding"/>
    <property type="evidence" value="ECO:0007669"/>
    <property type="project" value="UniProtKB-KW"/>
</dbReference>
<dbReference type="GO" id="GO:0016887">
    <property type="term" value="F:ATP hydrolysis activity"/>
    <property type="evidence" value="ECO:0007669"/>
    <property type="project" value="InterPro"/>
</dbReference>
<dbReference type="CDD" id="cd03216">
    <property type="entry name" value="ABC_Carb_Monos_I"/>
    <property type="match status" value="1"/>
</dbReference>
<dbReference type="CDD" id="cd03215">
    <property type="entry name" value="ABC_Carb_Monos_II"/>
    <property type="match status" value="1"/>
</dbReference>
<dbReference type="FunFam" id="3.40.50.300:FF:000126">
    <property type="entry name" value="Galactose/methyl galactoside import ATP-binding protein MglA"/>
    <property type="match status" value="1"/>
</dbReference>
<dbReference type="FunFam" id="3.40.50.300:FF:000127">
    <property type="entry name" value="Ribose import ATP-binding protein RbsA"/>
    <property type="match status" value="1"/>
</dbReference>
<dbReference type="Gene3D" id="3.40.50.300">
    <property type="entry name" value="P-loop containing nucleotide triphosphate hydrolases"/>
    <property type="match status" value="2"/>
</dbReference>
<dbReference type="InterPro" id="IPR003593">
    <property type="entry name" value="AAA+_ATPase"/>
</dbReference>
<dbReference type="InterPro" id="IPR050107">
    <property type="entry name" value="ABC_carbohydrate_import_ATPase"/>
</dbReference>
<dbReference type="InterPro" id="IPR003439">
    <property type="entry name" value="ABC_transporter-like_ATP-bd"/>
</dbReference>
<dbReference type="InterPro" id="IPR017871">
    <property type="entry name" value="ABC_transporter-like_CS"/>
</dbReference>
<dbReference type="InterPro" id="IPR027417">
    <property type="entry name" value="P-loop_NTPase"/>
</dbReference>
<dbReference type="NCBIfam" id="NF008215">
    <property type="entry name" value="PRK10982.1"/>
    <property type="match status" value="1"/>
</dbReference>
<dbReference type="PANTHER" id="PTHR43790">
    <property type="entry name" value="CARBOHYDRATE TRANSPORT ATP-BINDING PROTEIN MG119-RELATED"/>
    <property type="match status" value="1"/>
</dbReference>
<dbReference type="PANTHER" id="PTHR43790:SF7">
    <property type="entry name" value="GALACTOSE_METHYL GALACTOSIDE IMPORT ATP-BINDING PROTEIN MGLA"/>
    <property type="match status" value="1"/>
</dbReference>
<dbReference type="Pfam" id="PF00005">
    <property type="entry name" value="ABC_tran"/>
    <property type="match status" value="2"/>
</dbReference>
<dbReference type="SMART" id="SM00382">
    <property type="entry name" value="AAA"/>
    <property type="match status" value="2"/>
</dbReference>
<dbReference type="SUPFAM" id="SSF52540">
    <property type="entry name" value="P-loop containing nucleoside triphosphate hydrolases"/>
    <property type="match status" value="2"/>
</dbReference>
<dbReference type="PROSITE" id="PS00211">
    <property type="entry name" value="ABC_TRANSPORTER_1"/>
    <property type="match status" value="1"/>
</dbReference>
<dbReference type="PROSITE" id="PS50893">
    <property type="entry name" value="ABC_TRANSPORTER_2"/>
    <property type="match status" value="2"/>
</dbReference>
<dbReference type="PROSITE" id="PS51260">
    <property type="entry name" value="MGLA"/>
    <property type="match status" value="1"/>
</dbReference>
<accession>Q8XKQ2</accession>
<feature type="chain" id="PRO_0000261359" description="Galactose/methyl galactoside import ATP-binding protein MglA">
    <location>
        <begin position="1"/>
        <end position="515"/>
    </location>
</feature>
<feature type="domain" description="ABC transporter 1" evidence="1">
    <location>
        <begin position="8"/>
        <end position="243"/>
    </location>
</feature>
<feature type="domain" description="ABC transporter 2" evidence="1">
    <location>
        <begin position="254"/>
        <end position="499"/>
    </location>
</feature>
<feature type="binding site" evidence="1">
    <location>
        <begin position="40"/>
        <end position="47"/>
    </location>
    <ligand>
        <name>ATP</name>
        <dbReference type="ChEBI" id="CHEBI:30616"/>
    </ligand>
</feature>
<evidence type="ECO:0000255" key="1">
    <source>
        <dbReference type="HAMAP-Rule" id="MF_01717"/>
    </source>
</evidence>
<gene>
    <name evidence="1" type="primary">mglA</name>
    <name type="ordered locus">CPE1342</name>
</gene>
<reference key="1">
    <citation type="journal article" date="2002" name="Proc. Natl. Acad. Sci. U.S.A.">
        <title>Complete genome sequence of Clostridium perfringens, an anaerobic flesh-eater.</title>
        <authorList>
            <person name="Shimizu T."/>
            <person name="Ohtani K."/>
            <person name="Hirakawa H."/>
            <person name="Ohshima K."/>
            <person name="Yamashita A."/>
            <person name="Shiba T."/>
            <person name="Ogasawara N."/>
            <person name="Hattori M."/>
            <person name="Kuhara S."/>
            <person name="Hayashi H."/>
        </authorList>
    </citation>
    <scope>NUCLEOTIDE SEQUENCE [LARGE SCALE GENOMIC DNA]</scope>
    <source>
        <strain>13 / Type A</strain>
    </source>
</reference>
<sequence length="515" mass="57668">MKDSSNLLEMRNISKEFPGVKALDNVTLKVKKGSVHALMGENGAGKSTLMKCLFGIYHPNSGEIFISGQKVQFKNSKHALDNGVSMVHQELNQVRERNVMDNLWLGRYPKKGLFIDEKKMYDETEKIFKDLDINVNPRDKVSTLSVSQMQMVEIAKAVSYNSKIIVMDEPTSSLTEKEVSHLFKIINKLRKQGISIIYISHKMEEILEISDEVTIMRDGKWIATEKASDLTMDLIIKLMVGRELTDRFPKKDHIPKETTLEVNNLSDAKNELKNVSFKLRKGEILGIAGLVGAKRTETLETLFGLREKGSGDIILHGKKVDNSKPFKAMQNGFALVTEERRQTGIFGKLPIDFNSIIANIDSYKTSTGLLANERISKDTQWVIDSMKVKTPSQKTLIGSLSGGNQQKIVIGKWLLRKPEILLLDEPTRGIDVGAKFEIYQLINELAKEDKGIIMVSSEMPELLGVCDRILVMSNGRVSGIVNANETTQEEIMHLSAKYLSVTGGVNNANQIKEKV</sequence>
<proteinExistence type="inferred from homology"/>
<keyword id="KW-0067">ATP-binding</keyword>
<keyword id="KW-1003">Cell membrane</keyword>
<keyword id="KW-0472">Membrane</keyword>
<keyword id="KW-0547">Nucleotide-binding</keyword>
<keyword id="KW-1185">Reference proteome</keyword>
<keyword id="KW-0677">Repeat</keyword>
<keyword id="KW-0762">Sugar transport</keyword>
<keyword id="KW-1278">Translocase</keyword>
<keyword id="KW-0813">Transport</keyword>
<name>MGLA_CLOPE</name>
<comment type="function">
    <text evidence="1">Part of the ABC transporter complex MglABC involved in galactose/methyl galactoside import. Responsible for energy coupling to the transport system.</text>
</comment>
<comment type="catalytic activity">
    <reaction evidence="1">
        <text>D-galactose(out) + ATP + H2O = D-galactose(in) + ADP + phosphate + H(+)</text>
        <dbReference type="Rhea" id="RHEA:60156"/>
        <dbReference type="ChEBI" id="CHEBI:4139"/>
        <dbReference type="ChEBI" id="CHEBI:15377"/>
        <dbReference type="ChEBI" id="CHEBI:15378"/>
        <dbReference type="ChEBI" id="CHEBI:30616"/>
        <dbReference type="ChEBI" id="CHEBI:43474"/>
        <dbReference type="ChEBI" id="CHEBI:456216"/>
        <dbReference type="EC" id="7.5.2.11"/>
    </reaction>
    <physiologicalReaction direction="left-to-right" evidence="1">
        <dbReference type="Rhea" id="RHEA:60157"/>
    </physiologicalReaction>
</comment>
<comment type="catalytic activity">
    <reaction evidence="1">
        <text>methyl beta-D-galactoside(out) + ATP + H2O = methyl beta-D-galactoside(in) + ADP + phosphate + H(+)</text>
        <dbReference type="Rhea" id="RHEA:72531"/>
        <dbReference type="ChEBI" id="CHEBI:15377"/>
        <dbReference type="ChEBI" id="CHEBI:15378"/>
        <dbReference type="ChEBI" id="CHEBI:17540"/>
        <dbReference type="ChEBI" id="CHEBI:30616"/>
        <dbReference type="ChEBI" id="CHEBI:43474"/>
        <dbReference type="ChEBI" id="CHEBI:456216"/>
    </reaction>
    <physiologicalReaction direction="left-to-right" evidence="1">
        <dbReference type="Rhea" id="RHEA:72532"/>
    </physiologicalReaction>
</comment>
<comment type="subunit">
    <text evidence="1">The complex is composed of one ATP-binding protein (MglA), two transmembrane proteins (MglC) and a solute-binding protein (MglB).</text>
</comment>
<comment type="subcellular location">
    <subcellularLocation>
        <location evidence="1">Cell membrane</location>
        <topology evidence="1">Peripheral membrane protein</topology>
    </subcellularLocation>
</comment>
<comment type="similarity">
    <text evidence="1">Belongs to the ABC transporter superfamily. Galactose/methyl galactoside importer (TC 3.A.1.2.3) family.</text>
</comment>
<protein>
    <recommendedName>
        <fullName evidence="1">Galactose/methyl galactoside import ATP-binding protein MglA</fullName>
        <ecNumber evidence="1">7.5.2.11</ecNumber>
    </recommendedName>
</protein>
<organism>
    <name type="scientific">Clostridium perfringens (strain 13 / Type A)</name>
    <dbReference type="NCBI Taxonomy" id="195102"/>
    <lineage>
        <taxon>Bacteria</taxon>
        <taxon>Bacillati</taxon>
        <taxon>Bacillota</taxon>
        <taxon>Clostridia</taxon>
        <taxon>Eubacteriales</taxon>
        <taxon>Clostridiaceae</taxon>
        <taxon>Clostridium</taxon>
    </lineage>
</organism>